<proteinExistence type="inferred from homology"/>
<evidence type="ECO:0000255" key="1">
    <source>
        <dbReference type="HAMAP-Rule" id="MF_00109"/>
    </source>
</evidence>
<reference key="1">
    <citation type="submission" date="2007-05" db="EMBL/GenBank/DDBJ databases">
        <title>Complete sequence of Dehalococcoides sp. BAV1.</title>
        <authorList>
            <consortium name="US DOE Joint Genome Institute"/>
            <person name="Copeland A."/>
            <person name="Lucas S."/>
            <person name="Lapidus A."/>
            <person name="Barry K."/>
            <person name="Detter J.C."/>
            <person name="Glavina del Rio T."/>
            <person name="Hammon N."/>
            <person name="Israni S."/>
            <person name="Pitluck S."/>
            <person name="Lowry S."/>
            <person name="Clum A."/>
            <person name="Schmutz J."/>
            <person name="Larimer F."/>
            <person name="Land M."/>
            <person name="Hauser L."/>
            <person name="Kyrpides N."/>
            <person name="Kim E."/>
            <person name="Ritalahti K.M."/>
            <person name="Loeffler F."/>
            <person name="Richardson P."/>
        </authorList>
    </citation>
    <scope>NUCLEOTIDE SEQUENCE [LARGE SCALE GENOMIC DNA]</scope>
    <source>
        <strain>ATCC BAA-2100 / JCM 16839 / KCTC 5957 / BAV1</strain>
    </source>
</reference>
<protein>
    <recommendedName>
        <fullName evidence="1">Shikimate kinase</fullName>
        <shortName evidence="1">SK</shortName>
        <ecNumber evidence="1">2.7.1.71</ecNumber>
    </recommendedName>
</protein>
<dbReference type="EC" id="2.7.1.71" evidence="1"/>
<dbReference type="EMBL" id="CP000688">
    <property type="protein sequence ID" value="ABQ17026.1"/>
    <property type="molecule type" value="Genomic_DNA"/>
</dbReference>
<dbReference type="SMR" id="A5FRZ4"/>
<dbReference type="KEGG" id="deb:DehaBAV1_0441"/>
<dbReference type="PATRIC" id="fig|216389.18.peg.484"/>
<dbReference type="HOGENOM" id="CLU_057607_4_3_0"/>
<dbReference type="UniPathway" id="UPA00053">
    <property type="reaction ID" value="UER00088"/>
</dbReference>
<dbReference type="GO" id="GO:0005829">
    <property type="term" value="C:cytosol"/>
    <property type="evidence" value="ECO:0007669"/>
    <property type="project" value="TreeGrafter"/>
</dbReference>
<dbReference type="GO" id="GO:0005524">
    <property type="term" value="F:ATP binding"/>
    <property type="evidence" value="ECO:0007669"/>
    <property type="project" value="UniProtKB-UniRule"/>
</dbReference>
<dbReference type="GO" id="GO:0000287">
    <property type="term" value="F:magnesium ion binding"/>
    <property type="evidence" value="ECO:0007669"/>
    <property type="project" value="UniProtKB-UniRule"/>
</dbReference>
<dbReference type="GO" id="GO:0004765">
    <property type="term" value="F:shikimate kinase activity"/>
    <property type="evidence" value="ECO:0007669"/>
    <property type="project" value="UniProtKB-UniRule"/>
</dbReference>
<dbReference type="GO" id="GO:0008652">
    <property type="term" value="P:amino acid biosynthetic process"/>
    <property type="evidence" value="ECO:0007669"/>
    <property type="project" value="UniProtKB-KW"/>
</dbReference>
<dbReference type="GO" id="GO:0009073">
    <property type="term" value="P:aromatic amino acid family biosynthetic process"/>
    <property type="evidence" value="ECO:0007669"/>
    <property type="project" value="UniProtKB-KW"/>
</dbReference>
<dbReference type="GO" id="GO:0009423">
    <property type="term" value="P:chorismate biosynthetic process"/>
    <property type="evidence" value="ECO:0007669"/>
    <property type="project" value="UniProtKB-UniRule"/>
</dbReference>
<dbReference type="CDD" id="cd00464">
    <property type="entry name" value="SK"/>
    <property type="match status" value="1"/>
</dbReference>
<dbReference type="Gene3D" id="3.40.50.300">
    <property type="entry name" value="P-loop containing nucleotide triphosphate hydrolases"/>
    <property type="match status" value="1"/>
</dbReference>
<dbReference type="HAMAP" id="MF_00109">
    <property type="entry name" value="Shikimate_kinase"/>
    <property type="match status" value="1"/>
</dbReference>
<dbReference type="InterPro" id="IPR027417">
    <property type="entry name" value="P-loop_NTPase"/>
</dbReference>
<dbReference type="InterPro" id="IPR031322">
    <property type="entry name" value="Shikimate/glucono_kinase"/>
</dbReference>
<dbReference type="InterPro" id="IPR000623">
    <property type="entry name" value="Shikimate_kinase/TSH1"/>
</dbReference>
<dbReference type="PANTHER" id="PTHR21087">
    <property type="entry name" value="SHIKIMATE KINASE"/>
    <property type="match status" value="1"/>
</dbReference>
<dbReference type="PANTHER" id="PTHR21087:SF16">
    <property type="entry name" value="SHIKIMATE KINASE 1, CHLOROPLASTIC"/>
    <property type="match status" value="1"/>
</dbReference>
<dbReference type="Pfam" id="PF01202">
    <property type="entry name" value="SKI"/>
    <property type="match status" value="1"/>
</dbReference>
<dbReference type="PRINTS" id="PR01100">
    <property type="entry name" value="SHIKIMTKNASE"/>
</dbReference>
<dbReference type="SUPFAM" id="SSF52540">
    <property type="entry name" value="P-loop containing nucleoside triphosphate hydrolases"/>
    <property type="match status" value="1"/>
</dbReference>
<gene>
    <name evidence="1" type="primary">aroK</name>
    <name type="ordered locus">DehaBAV1_0441</name>
</gene>
<name>AROK_DEHMB</name>
<organism>
    <name type="scientific">Dehalococcoides mccartyi (strain ATCC BAA-2100 / JCM 16839 / KCTC 5957 / BAV1)</name>
    <dbReference type="NCBI Taxonomy" id="216389"/>
    <lineage>
        <taxon>Bacteria</taxon>
        <taxon>Bacillati</taxon>
        <taxon>Chloroflexota</taxon>
        <taxon>Dehalococcoidia</taxon>
        <taxon>Dehalococcoidales</taxon>
        <taxon>Dehalococcoidaceae</taxon>
        <taxon>Dehalococcoides</taxon>
    </lineage>
</organism>
<comment type="function">
    <text evidence="1">Catalyzes the specific phosphorylation of the 3-hydroxyl group of shikimic acid using ATP as a cosubstrate.</text>
</comment>
<comment type="catalytic activity">
    <reaction evidence="1">
        <text>shikimate + ATP = 3-phosphoshikimate + ADP + H(+)</text>
        <dbReference type="Rhea" id="RHEA:13121"/>
        <dbReference type="ChEBI" id="CHEBI:15378"/>
        <dbReference type="ChEBI" id="CHEBI:30616"/>
        <dbReference type="ChEBI" id="CHEBI:36208"/>
        <dbReference type="ChEBI" id="CHEBI:145989"/>
        <dbReference type="ChEBI" id="CHEBI:456216"/>
        <dbReference type="EC" id="2.7.1.71"/>
    </reaction>
</comment>
<comment type="cofactor">
    <cofactor evidence="1">
        <name>Mg(2+)</name>
        <dbReference type="ChEBI" id="CHEBI:18420"/>
    </cofactor>
    <text evidence="1">Binds 1 Mg(2+) ion per subunit.</text>
</comment>
<comment type="pathway">
    <text evidence="1">Metabolic intermediate biosynthesis; chorismate biosynthesis; chorismate from D-erythrose 4-phosphate and phosphoenolpyruvate: step 5/7.</text>
</comment>
<comment type="subunit">
    <text evidence="1">Monomer.</text>
</comment>
<comment type="subcellular location">
    <subcellularLocation>
        <location evidence="1">Cytoplasm</location>
    </subcellularLocation>
</comment>
<comment type="similarity">
    <text evidence="1">Belongs to the shikimate kinase family.</text>
</comment>
<keyword id="KW-0028">Amino-acid biosynthesis</keyword>
<keyword id="KW-0057">Aromatic amino acid biosynthesis</keyword>
<keyword id="KW-0067">ATP-binding</keyword>
<keyword id="KW-0963">Cytoplasm</keyword>
<keyword id="KW-0418">Kinase</keyword>
<keyword id="KW-0460">Magnesium</keyword>
<keyword id="KW-0479">Metal-binding</keyword>
<keyword id="KW-0547">Nucleotide-binding</keyword>
<keyword id="KW-0808">Transferase</keyword>
<sequence>MKTKNNIALIGFMGAGKSSISKLLSEKLGKPLVSTDACIETREGLSISHIFKENGEDYFRQMESKVLEDICQNPNQIIDCGGGIVTRPHNLSIMRLNCLVVYLESRPEDLENRLKNHTNRPLFNAERSDKMLKLLESRLPLYRDAADITVSTHNKSCHEVCEEIEDSLRKYENTSG</sequence>
<feature type="chain" id="PRO_1000075949" description="Shikimate kinase">
    <location>
        <begin position="1"/>
        <end position="176"/>
    </location>
</feature>
<feature type="binding site" evidence="1">
    <location>
        <begin position="14"/>
        <end position="19"/>
    </location>
    <ligand>
        <name>ATP</name>
        <dbReference type="ChEBI" id="CHEBI:30616"/>
    </ligand>
</feature>
<feature type="binding site" evidence="1">
    <location>
        <position position="18"/>
    </location>
    <ligand>
        <name>Mg(2+)</name>
        <dbReference type="ChEBI" id="CHEBI:18420"/>
    </ligand>
</feature>
<feature type="binding site" evidence="1">
    <location>
        <position position="36"/>
    </location>
    <ligand>
        <name>substrate</name>
    </ligand>
</feature>
<feature type="binding site" evidence="1">
    <location>
        <position position="60"/>
    </location>
    <ligand>
        <name>substrate</name>
    </ligand>
</feature>
<feature type="binding site" evidence="1">
    <location>
        <position position="82"/>
    </location>
    <ligand>
        <name>substrate</name>
    </ligand>
</feature>
<feature type="binding site" evidence="1">
    <location>
        <position position="120"/>
    </location>
    <ligand>
        <name>ATP</name>
        <dbReference type="ChEBI" id="CHEBI:30616"/>
    </ligand>
</feature>
<feature type="binding site" evidence="1">
    <location>
        <position position="138"/>
    </location>
    <ligand>
        <name>substrate</name>
    </ligand>
</feature>
<accession>A5FRZ4</accession>